<evidence type="ECO:0000255" key="1">
    <source>
        <dbReference type="HAMAP-Rule" id="MF_01495"/>
    </source>
</evidence>
<keyword id="KW-0148">Chlorophyll</keyword>
<keyword id="KW-0150">Chloroplast</keyword>
<keyword id="KW-0157">Chromophore</keyword>
<keyword id="KW-0472">Membrane</keyword>
<keyword id="KW-0602">Photosynthesis</keyword>
<keyword id="KW-0604">Photosystem II</keyword>
<keyword id="KW-0934">Plastid</keyword>
<keyword id="KW-0793">Thylakoid</keyword>
<keyword id="KW-0812">Transmembrane</keyword>
<keyword id="KW-1133">Transmembrane helix</keyword>
<accession>A7Y3H4</accession>
<feature type="chain" id="PRO_0000359831" description="Photosystem II CP47 reaction center protein">
    <location>
        <begin position="1"/>
        <end position="508"/>
    </location>
</feature>
<feature type="transmembrane region" description="Helical" evidence="1">
    <location>
        <begin position="21"/>
        <end position="36"/>
    </location>
</feature>
<feature type="transmembrane region" description="Helical" evidence="1">
    <location>
        <begin position="101"/>
        <end position="115"/>
    </location>
</feature>
<feature type="transmembrane region" description="Helical" evidence="1">
    <location>
        <begin position="140"/>
        <end position="156"/>
    </location>
</feature>
<feature type="transmembrane region" description="Helical" evidence="1">
    <location>
        <begin position="203"/>
        <end position="218"/>
    </location>
</feature>
<feature type="transmembrane region" description="Helical" evidence="1">
    <location>
        <begin position="237"/>
        <end position="252"/>
    </location>
</feature>
<feature type="transmembrane region" description="Helical" evidence="1">
    <location>
        <begin position="457"/>
        <end position="472"/>
    </location>
</feature>
<comment type="function">
    <text evidence="1">One of the components of the core complex of photosystem II (PSII). It binds chlorophyll and helps catalyze the primary light-induced photochemical processes of PSII. PSII is a light-driven water:plastoquinone oxidoreductase, using light energy to abstract electrons from H(2)O, generating O(2) and a proton gradient subsequently used for ATP formation.</text>
</comment>
<comment type="cofactor">
    <text evidence="1">Binds multiple chlorophylls. PSII binds additional chlorophylls, carotenoids and specific lipids.</text>
</comment>
<comment type="subunit">
    <text evidence="1">PSII is composed of 1 copy each of membrane proteins PsbA, PsbB, PsbC, PsbD, PsbE, PsbF, PsbH, PsbI, PsbJ, PsbK, PsbL, PsbM, PsbT, PsbX, PsbY, PsbZ, Psb30/Ycf12, at least 3 peripheral proteins of the oxygen-evolving complex and a large number of cofactors. It forms dimeric complexes.</text>
</comment>
<comment type="subcellular location">
    <subcellularLocation>
        <location evidence="1">Plastid</location>
        <location evidence="1">Chloroplast thylakoid membrane</location>
        <topology evidence="1">Multi-pass membrane protein</topology>
    </subcellularLocation>
</comment>
<comment type="similarity">
    <text evidence="1">Belongs to the PsbB/PsbC family. PsbB subfamily.</text>
</comment>
<sequence>MGLPWYRVHTVVLNDPGRLLSVHIMHTALVAGWAGSMALYELAVFDPSDPVLDPMWRQGMFVIPFMTRLGITNSWGGWSITGGTVTNPGIWSYEGVAGAHIVFSGLCFLAAIWHWVYWDLEIFCDERTGKPSLDLPKIFGIHLFLSGLACFGFGAFHVTGLYGPGIWVSDPYGLTGKVQPVNPAWGVEGFDPFVPGGIASHHIAAGTLGILAGLFHLSVRPPQRLYKGLRMGNIETVLSSSIAAVFFAAFVVAGTMWYGSATTPIELFGPTRYQWDQGYFQQEIYRRVSAGLAENQSLSEAWSKIPEKLAFYDYIGNNPAKGGLFRAGSMDNGDGIAVGWLGHPIFRDKEGRELFVRRMPTFFETFPVVLVDGDGIVRADVPFRRAESKYSVEQVGVTVAFYGGELNGVSYSDPTTVKKYARRAQLGEIFELDRATLKSDGVFRSSPRGWFTFGHASFALLFFFGHIWHGARTLFRDVFAGIDPDLDAQVEFGAFLKLGDPTTKRQAA</sequence>
<gene>
    <name evidence="1" type="primary">psbB</name>
</gene>
<dbReference type="EMBL" id="EU118126">
    <property type="protein sequence ID" value="ABV02374.1"/>
    <property type="molecule type" value="Genomic_DNA"/>
</dbReference>
<dbReference type="RefSeq" id="YP_001468334.1">
    <property type="nucleotide sequence ID" value="NC_009808.1"/>
</dbReference>
<dbReference type="SMR" id="A7Y3H4"/>
<dbReference type="GeneID" id="5601325"/>
<dbReference type="GO" id="GO:0009535">
    <property type="term" value="C:chloroplast thylakoid membrane"/>
    <property type="evidence" value="ECO:0007669"/>
    <property type="project" value="UniProtKB-SubCell"/>
</dbReference>
<dbReference type="GO" id="GO:0009523">
    <property type="term" value="C:photosystem II"/>
    <property type="evidence" value="ECO:0007669"/>
    <property type="project" value="UniProtKB-KW"/>
</dbReference>
<dbReference type="GO" id="GO:0016168">
    <property type="term" value="F:chlorophyll binding"/>
    <property type="evidence" value="ECO:0007669"/>
    <property type="project" value="UniProtKB-UniRule"/>
</dbReference>
<dbReference type="GO" id="GO:0045156">
    <property type="term" value="F:electron transporter, transferring electrons within the cyclic electron transport pathway of photosynthesis activity"/>
    <property type="evidence" value="ECO:0007669"/>
    <property type="project" value="InterPro"/>
</dbReference>
<dbReference type="GO" id="GO:0009772">
    <property type="term" value="P:photosynthetic electron transport in photosystem II"/>
    <property type="evidence" value="ECO:0007669"/>
    <property type="project" value="InterPro"/>
</dbReference>
<dbReference type="FunFam" id="3.10.680.10:FF:000001">
    <property type="entry name" value="Photosystem II CP47 reaction center protein"/>
    <property type="match status" value="1"/>
</dbReference>
<dbReference type="Gene3D" id="3.10.680.10">
    <property type="entry name" value="Photosystem II CP47 reaction center protein"/>
    <property type="match status" value="1"/>
</dbReference>
<dbReference type="HAMAP" id="MF_01495">
    <property type="entry name" value="PSII_PsbB_CP47"/>
    <property type="match status" value="1"/>
</dbReference>
<dbReference type="InterPro" id="IPR000932">
    <property type="entry name" value="PS_antenna-like"/>
</dbReference>
<dbReference type="InterPro" id="IPR036001">
    <property type="entry name" value="PS_II_antenna-like_sf"/>
</dbReference>
<dbReference type="InterPro" id="IPR017486">
    <property type="entry name" value="PSII_PsbB"/>
</dbReference>
<dbReference type="NCBIfam" id="TIGR03039">
    <property type="entry name" value="PS_II_CP47"/>
    <property type="match status" value="1"/>
</dbReference>
<dbReference type="PANTHER" id="PTHR33180">
    <property type="entry name" value="PHOTOSYSTEM II CP43 REACTION CENTER PROTEIN"/>
    <property type="match status" value="1"/>
</dbReference>
<dbReference type="PANTHER" id="PTHR33180:SF35">
    <property type="entry name" value="PHOTOSYSTEM II CP47 REACTION CENTER PROTEIN"/>
    <property type="match status" value="1"/>
</dbReference>
<dbReference type="Pfam" id="PF00421">
    <property type="entry name" value="PSII"/>
    <property type="match status" value="1"/>
</dbReference>
<dbReference type="SUPFAM" id="SSF161077">
    <property type="entry name" value="Photosystem II antenna protein-like"/>
    <property type="match status" value="1"/>
</dbReference>
<geneLocation type="chloroplast"/>
<proteinExistence type="inferred from homology"/>
<reference key="1">
    <citation type="journal article" date="2007" name="BMC Plant Biol.">
        <title>Complete plastid genome sequences suggest strong selection for retention of photosynthetic genes in the parasitic plant genus Cuscuta.</title>
        <authorList>
            <person name="McNeal J.R."/>
            <person name="Kuehl J.V."/>
            <person name="Boore J.L."/>
            <person name="dePamphilis C.W."/>
        </authorList>
    </citation>
    <scope>NUCLEOTIDE SEQUENCE [LARGE SCALE GENOMIC DNA]</scope>
</reference>
<protein>
    <recommendedName>
        <fullName evidence="1">Photosystem II CP47 reaction center protein</fullName>
    </recommendedName>
    <alternativeName>
        <fullName evidence="1">PSII 47 kDa protein</fullName>
    </alternativeName>
    <alternativeName>
        <fullName evidence="1">Protein CP-47</fullName>
    </alternativeName>
</protein>
<organism>
    <name type="scientific">Ipomoea purpurea</name>
    <name type="common">Common morning glory</name>
    <name type="synonym">Pharbitis purpurea</name>
    <dbReference type="NCBI Taxonomy" id="4121"/>
    <lineage>
        <taxon>Eukaryota</taxon>
        <taxon>Viridiplantae</taxon>
        <taxon>Streptophyta</taxon>
        <taxon>Embryophyta</taxon>
        <taxon>Tracheophyta</taxon>
        <taxon>Spermatophyta</taxon>
        <taxon>Magnoliopsida</taxon>
        <taxon>eudicotyledons</taxon>
        <taxon>Gunneridae</taxon>
        <taxon>Pentapetalae</taxon>
        <taxon>asterids</taxon>
        <taxon>lamiids</taxon>
        <taxon>Solanales</taxon>
        <taxon>Convolvulaceae</taxon>
        <taxon>Ipomoeeae</taxon>
        <taxon>Ipomoea</taxon>
    </lineage>
</organism>
<name>PSBB_IPOPU</name>